<proteinExistence type="inferred from homology"/>
<protein>
    <recommendedName>
        <fullName evidence="1">Cobyric acid synthase</fullName>
    </recommendedName>
</protein>
<sequence length="484" mass="51687">MTTLMVQGTTSDAGKSTLVTALCRWLLRQGVAVVPFKPQNMALNSAVTADGGEIGRAQAVQAQACRLQPHTDMNPVLLKPNSDTGAQVIIHGRAVTSMNAVAYHDYKTTAMQAVLASHQRLSAAYPVVMVEGAGSPAEINLRAGDIANMGFAEAVDCPVILVADINRGGVFAHLVGTLELLSTTEQARVKGFVINRFRGDIALLQPGLDWLEQRTGKPVLGVLPYVTDLHLEAEDGIDVRQGVKHARVLKVIVPVLPRISNHTDFDPLRLHSQVDLQFIGPGQPIPAADLIILPGSKSVRGDLAQLRERGWDKAIERHLRYGGKLIGICGGLQMLGREVHDPLGLEGAAGSSQGLGLLDYATVLEAEKQLRNVAGTLSLEAATVTGYEIHAGVTTGPALAQPAVQLADGRHDGAVSADDQILATYLHGLFEGSQSCAALLRWAGLEDVQVIDYEALREHDIERLADLVEKHLDTAQLRQLCGVA</sequence>
<dbReference type="EMBL" id="CP000712">
    <property type="protein sequence ID" value="ABQ80166.1"/>
    <property type="molecule type" value="Genomic_DNA"/>
</dbReference>
<dbReference type="SMR" id="A5W7Q6"/>
<dbReference type="KEGG" id="ppf:Pput_4042"/>
<dbReference type="eggNOG" id="COG1492">
    <property type="taxonomic scope" value="Bacteria"/>
</dbReference>
<dbReference type="HOGENOM" id="CLU_019250_2_2_6"/>
<dbReference type="UniPathway" id="UPA00148"/>
<dbReference type="GO" id="GO:0015420">
    <property type="term" value="F:ABC-type vitamin B12 transporter activity"/>
    <property type="evidence" value="ECO:0007669"/>
    <property type="project" value="UniProtKB-UniRule"/>
</dbReference>
<dbReference type="GO" id="GO:0003824">
    <property type="term" value="F:catalytic activity"/>
    <property type="evidence" value="ECO:0007669"/>
    <property type="project" value="InterPro"/>
</dbReference>
<dbReference type="GO" id="GO:0009236">
    <property type="term" value="P:cobalamin biosynthetic process"/>
    <property type="evidence" value="ECO:0007669"/>
    <property type="project" value="UniProtKB-UniRule"/>
</dbReference>
<dbReference type="CDD" id="cd05389">
    <property type="entry name" value="CobQ_N"/>
    <property type="match status" value="1"/>
</dbReference>
<dbReference type="CDD" id="cd01750">
    <property type="entry name" value="GATase1_CobQ"/>
    <property type="match status" value="1"/>
</dbReference>
<dbReference type="Gene3D" id="3.40.50.880">
    <property type="match status" value="1"/>
</dbReference>
<dbReference type="Gene3D" id="3.40.50.300">
    <property type="entry name" value="P-loop containing nucleotide triphosphate hydrolases"/>
    <property type="match status" value="1"/>
</dbReference>
<dbReference type="HAMAP" id="MF_00028">
    <property type="entry name" value="CobQ"/>
    <property type="match status" value="1"/>
</dbReference>
<dbReference type="InterPro" id="IPR029062">
    <property type="entry name" value="Class_I_gatase-like"/>
</dbReference>
<dbReference type="InterPro" id="IPR002586">
    <property type="entry name" value="CobQ/CobB/MinD/ParA_Nub-bd_dom"/>
</dbReference>
<dbReference type="InterPro" id="IPR033949">
    <property type="entry name" value="CobQ_GATase1"/>
</dbReference>
<dbReference type="InterPro" id="IPR047045">
    <property type="entry name" value="CobQ_N"/>
</dbReference>
<dbReference type="InterPro" id="IPR004459">
    <property type="entry name" value="CobQ_synth"/>
</dbReference>
<dbReference type="InterPro" id="IPR011698">
    <property type="entry name" value="GATase_3"/>
</dbReference>
<dbReference type="InterPro" id="IPR027417">
    <property type="entry name" value="P-loop_NTPase"/>
</dbReference>
<dbReference type="NCBIfam" id="TIGR00313">
    <property type="entry name" value="cobQ"/>
    <property type="match status" value="1"/>
</dbReference>
<dbReference type="NCBIfam" id="NF001989">
    <property type="entry name" value="PRK00784.1"/>
    <property type="match status" value="1"/>
</dbReference>
<dbReference type="PANTHER" id="PTHR21343:SF1">
    <property type="entry name" value="COBYRIC ACID SYNTHASE"/>
    <property type="match status" value="1"/>
</dbReference>
<dbReference type="PANTHER" id="PTHR21343">
    <property type="entry name" value="DETHIOBIOTIN SYNTHETASE"/>
    <property type="match status" value="1"/>
</dbReference>
<dbReference type="Pfam" id="PF01656">
    <property type="entry name" value="CbiA"/>
    <property type="match status" value="1"/>
</dbReference>
<dbReference type="Pfam" id="PF07685">
    <property type="entry name" value="GATase_3"/>
    <property type="match status" value="1"/>
</dbReference>
<dbReference type="SUPFAM" id="SSF52317">
    <property type="entry name" value="Class I glutamine amidotransferase-like"/>
    <property type="match status" value="1"/>
</dbReference>
<dbReference type="SUPFAM" id="SSF52540">
    <property type="entry name" value="P-loop containing nucleoside triphosphate hydrolases"/>
    <property type="match status" value="1"/>
</dbReference>
<dbReference type="PROSITE" id="PS51274">
    <property type="entry name" value="GATASE_COBBQ"/>
    <property type="match status" value="1"/>
</dbReference>
<organism>
    <name type="scientific">Pseudomonas putida (strain ATCC 700007 / DSM 6899 / JCM 31910 / BCRC 17059 / LMG 24140 / F1)</name>
    <dbReference type="NCBI Taxonomy" id="351746"/>
    <lineage>
        <taxon>Bacteria</taxon>
        <taxon>Pseudomonadati</taxon>
        <taxon>Pseudomonadota</taxon>
        <taxon>Gammaproteobacteria</taxon>
        <taxon>Pseudomonadales</taxon>
        <taxon>Pseudomonadaceae</taxon>
        <taxon>Pseudomonas</taxon>
    </lineage>
</organism>
<reference key="1">
    <citation type="submission" date="2007-05" db="EMBL/GenBank/DDBJ databases">
        <title>Complete sequence of Pseudomonas putida F1.</title>
        <authorList>
            <consortium name="US DOE Joint Genome Institute"/>
            <person name="Copeland A."/>
            <person name="Lucas S."/>
            <person name="Lapidus A."/>
            <person name="Barry K."/>
            <person name="Detter J.C."/>
            <person name="Glavina del Rio T."/>
            <person name="Hammon N."/>
            <person name="Israni S."/>
            <person name="Dalin E."/>
            <person name="Tice H."/>
            <person name="Pitluck S."/>
            <person name="Chain P."/>
            <person name="Malfatti S."/>
            <person name="Shin M."/>
            <person name="Vergez L."/>
            <person name="Schmutz J."/>
            <person name="Larimer F."/>
            <person name="Land M."/>
            <person name="Hauser L."/>
            <person name="Kyrpides N."/>
            <person name="Lykidis A."/>
            <person name="Parales R."/>
            <person name="Richardson P."/>
        </authorList>
    </citation>
    <scope>NUCLEOTIDE SEQUENCE [LARGE SCALE GENOMIC DNA]</scope>
    <source>
        <strain>ATCC 700007 / DSM 6899 / JCM 31910 / BCRC 17059 / LMG 24140 / F1</strain>
    </source>
</reference>
<accession>A5W7Q6</accession>
<evidence type="ECO:0000255" key="1">
    <source>
        <dbReference type="HAMAP-Rule" id="MF_00028"/>
    </source>
</evidence>
<comment type="function">
    <text evidence="1">Catalyzes amidations at positions B, D, E, and G on adenosylcobyrinic A,C-diamide. NH(2) groups are provided by glutamine, and one molecule of ATP is hydrogenolyzed for each amidation.</text>
</comment>
<comment type="pathway">
    <text evidence="1">Cofactor biosynthesis; adenosylcobalamin biosynthesis.</text>
</comment>
<comment type="similarity">
    <text evidence="1">Belongs to the CobB/CobQ family. CobQ subfamily.</text>
</comment>
<keyword id="KW-0169">Cobalamin biosynthesis</keyword>
<keyword id="KW-0315">Glutamine amidotransferase</keyword>
<feature type="chain" id="PRO_0000332373" description="Cobyric acid synthase">
    <location>
        <begin position="1"/>
        <end position="484"/>
    </location>
</feature>
<feature type="domain" description="GATase cobBQ-type" evidence="1">
    <location>
        <begin position="248"/>
        <end position="435"/>
    </location>
</feature>
<feature type="active site" description="Nucleophile" evidence="1">
    <location>
        <position position="329"/>
    </location>
</feature>
<feature type="active site" evidence="1">
    <location>
        <position position="427"/>
    </location>
</feature>
<name>COBQ_PSEP1</name>
<gene>
    <name evidence="1" type="primary">cobQ</name>
    <name type="ordered locus">Pput_4042</name>
</gene>